<reference key="1">
    <citation type="journal article" date="1997" name="Proc. Natl. Acad. Sci. U.S.A.">
        <title>Sequence of a 189-kb segment of the chromosome of Rhodobacter capsulatus SB1003.</title>
        <authorList>
            <person name="Vlcek C."/>
            <person name="Paces V."/>
            <person name="Maltsev N."/>
            <person name="Paces J."/>
            <person name="Haselkorn R."/>
            <person name="Fonstein M."/>
        </authorList>
    </citation>
    <scope>NUCLEOTIDE SEQUENCE [GENOMIC DNA]</scope>
    <source>
        <strain>ATCC BAA-309 / NBRC 16581 / SB1003</strain>
    </source>
</reference>
<reference key="2">
    <citation type="journal article" date="2010" name="J. Bacteriol.">
        <title>Complete genome sequence of the photosynthetic purple nonsulfur bacterium Rhodobacter capsulatus SB 1003.</title>
        <authorList>
            <person name="Strnad H."/>
            <person name="Lapidus A."/>
            <person name="Paces J."/>
            <person name="Ulbrich P."/>
            <person name="Vlcek C."/>
            <person name="Paces V."/>
            <person name="Haselkorn R."/>
        </authorList>
    </citation>
    <scope>NUCLEOTIDE SEQUENCE [LARGE SCALE GENOMIC DNA]</scope>
    <source>
        <strain>ATCC BAA-309 / NBRC 16581 / SB1003</strain>
    </source>
</reference>
<protein>
    <recommendedName>
        <fullName>Nuclease SbcCD subunit C</fullName>
    </recommendedName>
</protein>
<dbReference type="EMBL" id="AF010496">
    <property type="protein sequence ID" value="AAC16118.1"/>
    <property type="molecule type" value="Genomic_DNA"/>
</dbReference>
<dbReference type="EMBL" id="CP001312">
    <property type="protein sequence ID" value="ADE85864.1"/>
    <property type="molecule type" value="Genomic_DNA"/>
</dbReference>
<dbReference type="PIR" id="T03465">
    <property type="entry name" value="T03465"/>
</dbReference>
<dbReference type="RefSeq" id="WP_013067843.1">
    <property type="nucleotide sequence ID" value="NC_014034.1"/>
</dbReference>
<dbReference type="SMR" id="O68032"/>
<dbReference type="STRING" id="272942.RCAP_rcc02134"/>
<dbReference type="GeneID" id="78824122"/>
<dbReference type="KEGG" id="rcp:RCAP_rcc02134"/>
<dbReference type="eggNOG" id="COG0419">
    <property type="taxonomic scope" value="Bacteria"/>
</dbReference>
<dbReference type="HOGENOM" id="CLU_004785_1_1_5"/>
<dbReference type="OrthoDB" id="9795626at2"/>
<dbReference type="Proteomes" id="UP000002361">
    <property type="component" value="Chromosome"/>
</dbReference>
<dbReference type="GO" id="GO:0005524">
    <property type="term" value="F:ATP binding"/>
    <property type="evidence" value="ECO:0007669"/>
    <property type="project" value="UniProtKB-KW"/>
</dbReference>
<dbReference type="GO" id="GO:0016887">
    <property type="term" value="F:ATP hydrolysis activity"/>
    <property type="evidence" value="ECO:0007669"/>
    <property type="project" value="InterPro"/>
</dbReference>
<dbReference type="GO" id="GO:0004519">
    <property type="term" value="F:endonuclease activity"/>
    <property type="evidence" value="ECO:0007669"/>
    <property type="project" value="UniProtKB-KW"/>
</dbReference>
<dbReference type="GO" id="GO:0004527">
    <property type="term" value="F:exonuclease activity"/>
    <property type="evidence" value="ECO:0007669"/>
    <property type="project" value="UniProtKB-KW"/>
</dbReference>
<dbReference type="GO" id="GO:0006310">
    <property type="term" value="P:DNA recombination"/>
    <property type="evidence" value="ECO:0007669"/>
    <property type="project" value="UniProtKB-KW"/>
</dbReference>
<dbReference type="GO" id="GO:0006260">
    <property type="term" value="P:DNA replication"/>
    <property type="evidence" value="ECO:0007669"/>
    <property type="project" value="UniProtKB-KW"/>
</dbReference>
<dbReference type="GO" id="GO:0006302">
    <property type="term" value="P:double-strand break repair"/>
    <property type="evidence" value="ECO:0007669"/>
    <property type="project" value="InterPro"/>
</dbReference>
<dbReference type="Gene3D" id="3.40.50.300">
    <property type="entry name" value="P-loop containing nucleotide triphosphate hydrolases"/>
    <property type="match status" value="2"/>
</dbReference>
<dbReference type="InterPro" id="IPR027417">
    <property type="entry name" value="P-loop_NTPase"/>
</dbReference>
<dbReference type="InterPro" id="IPR038729">
    <property type="entry name" value="Rad50/SbcC_AAA"/>
</dbReference>
<dbReference type="PANTHER" id="PTHR32114">
    <property type="entry name" value="ABC TRANSPORTER ABCH.3"/>
    <property type="match status" value="1"/>
</dbReference>
<dbReference type="PANTHER" id="PTHR32114:SF2">
    <property type="entry name" value="ABC TRANSPORTER ABCH.3"/>
    <property type="match status" value="1"/>
</dbReference>
<dbReference type="Pfam" id="PF13476">
    <property type="entry name" value="AAA_23"/>
    <property type="match status" value="1"/>
</dbReference>
<dbReference type="Pfam" id="PF13558">
    <property type="entry name" value="SbcC_Walker_B"/>
    <property type="match status" value="1"/>
</dbReference>
<dbReference type="SUPFAM" id="SSF52540">
    <property type="entry name" value="P-loop containing nucleoside triphosphate hydrolases"/>
    <property type="match status" value="1"/>
</dbReference>
<name>SBCC_RHOCB</name>
<evidence type="ECO:0000250" key="1"/>
<evidence type="ECO:0000255" key="2"/>
<evidence type="ECO:0000256" key="3">
    <source>
        <dbReference type="SAM" id="MobiDB-lite"/>
    </source>
</evidence>
<evidence type="ECO:0000305" key="4"/>
<accession>O68032</accession>
<accession>D5AV82</accession>
<sequence length="1238" mass="128048">MRILSISGQNIASLAAPFRIDFTTAPLAGAGLFAITGETGAGKSSILDAMCLALYGDAPRLSAGARSDKVPDAAGEEISAADSRAILRRGAATGWAEVRFAGRDGLEYIARWQARRARDKVEGKLQTVARSLARAEDGQVLAAQTQAVSEQVAALTGLSYEEFRRTVLLAQGDFDAFLRADTGERATLLEKVTGTGLYRAVSIRVYERTEMARAEHAQLLARAAEHRLLDDAARAALTEEIAARTAATAAATAERAGLSEALARHRRHAEAVRQVQAAAAALAGAEALQAEAGPARAQLDRLERAAPLHLPWQAAAEARARLDAARSGAEAAAASRSLAAQALATRADAAARATAAGTETEEAFKAFGRIWDRAAALDAQIATAATEAEAARTRAAETARAAAGIRRAEADLAAAETRAQQARQAAEARLAELAAQAPLADDWPQLRRDLADHRAACAAQAAAATAAQAAQDRAQALAQEARAAAAAEARDQAADSALAKAAAALQQALAPLEAAHPPARTADLARIETDLAELTRALRDGAEAAALGAAAQRAATAAATEAALARAQESAAKQDLDRAETQIAALTAPLEQADLALSDAARSLRAQLSAGSPCPVCGALEHPTPAEAGLAHLAERLRADQAAARGAAQAARDALTAAQGARATAEARGTQAAEDQRRAQTRAEAARAAWGDTQPRVSARPLAPALPGTPDPTALAAAQDRLCALQTAEAAAQAEISALRTRLTEAERDRERLRRALLAHRGTRERLAVQQAETAQEAALAEARRTEAAARRDGLALALAPALARAGEDDPAAPGLAERLAATVSAVGAARTGLQAAQEALSALAPQLAAARRDSETATAQAQSAAQAARDRDGAWAALRAERAPLLDGQPTALHRSRFNDQRLAAQRAQQAAAADLATAQAALAAAEARAAETARAASEAATAQRAAEADLAAALEAAAMSAAELAALIALPPGTAERLRADLRGRDDAVTAARSALGARKTDLQEIEDQGNPAEDPEALSARLAALEAEAERRAQEIGQLSAELARDAATRAALAGLAVETEAARAELEVWEAVNKAIGARSGDRFARIAQAITLDVLVEHANRHLADLNPRYRLRRAAELSLQVEDRDMGDTARATRSLSGGERFLVSLALALALSQMGGKGTFAGTLFIDEGFGALDAGSLDLAIDALETLQSQGRQVGVISHVEAMQARIATRIAVRKEGGGRSSLRVEGPGV</sequence>
<gene>
    <name type="primary">sbcC</name>
    <name type="ordered locus">RCAP_rcc02134</name>
</gene>
<proteinExistence type="inferred from homology"/>
<keyword id="KW-0067">ATP-binding</keyword>
<keyword id="KW-0175">Coiled coil</keyword>
<keyword id="KW-0233">DNA recombination</keyword>
<keyword id="KW-0235">DNA replication</keyword>
<keyword id="KW-0255">Endonuclease</keyword>
<keyword id="KW-0269">Exonuclease</keyword>
<keyword id="KW-0378">Hydrolase</keyword>
<keyword id="KW-0540">Nuclease</keyword>
<keyword id="KW-0547">Nucleotide-binding</keyword>
<keyword id="KW-1185">Reference proteome</keyword>
<comment type="function">
    <text evidence="1">SbcCD cleaves DNA hairpin structures. These structures can inhibit DNA replication and are intermediates in certain DNA recombination reactions. The complex acts as a 3'-&gt;5' double strand exonuclease that can open hairpins. It also has a 5' single-strand endonuclease activity (By similarity).</text>
</comment>
<comment type="subunit">
    <text evidence="1">Heterodimer of SbcC and SbcD.</text>
</comment>
<comment type="similarity">
    <text evidence="4">Belongs to the SMC family. SbcC subfamily.</text>
</comment>
<feature type="chain" id="PRO_0000105867" description="Nuclease SbcCD subunit C">
    <location>
        <begin position="1"/>
        <end position="1238"/>
    </location>
</feature>
<feature type="region of interest" description="Disordered" evidence="3">
    <location>
        <begin position="661"/>
        <end position="713"/>
    </location>
</feature>
<feature type="coiled-coil region" evidence="2">
    <location>
        <begin position="395"/>
        <end position="438"/>
    </location>
</feature>
<feature type="coiled-coil region" evidence="2">
    <location>
        <begin position="466"/>
        <end position="487"/>
    </location>
</feature>
<feature type="coiled-coil region" evidence="2">
    <location>
        <begin position="521"/>
        <end position="600"/>
    </location>
</feature>
<feature type="coiled-coil region" evidence="2">
    <location>
        <begin position="724"/>
        <end position="770"/>
    </location>
</feature>
<feature type="coiled-coil region" evidence="2">
    <location>
        <begin position="901"/>
        <end position="943"/>
    </location>
</feature>
<feature type="coiled-coil region" evidence="2">
    <location>
        <begin position="1019"/>
        <end position="1052"/>
    </location>
</feature>
<feature type="compositionally biased region" description="Low complexity" evidence="3">
    <location>
        <begin position="661"/>
        <end position="673"/>
    </location>
</feature>
<feature type="binding site" evidence="2">
    <location>
        <begin position="37"/>
        <end position="44"/>
    </location>
    <ligand>
        <name>ATP</name>
        <dbReference type="ChEBI" id="CHEBI:30616"/>
    </ligand>
</feature>
<organism>
    <name type="scientific">Rhodobacter capsulatus (strain ATCC BAA-309 / NBRC 16581 / SB1003)</name>
    <dbReference type="NCBI Taxonomy" id="272942"/>
    <lineage>
        <taxon>Bacteria</taxon>
        <taxon>Pseudomonadati</taxon>
        <taxon>Pseudomonadota</taxon>
        <taxon>Alphaproteobacteria</taxon>
        <taxon>Rhodobacterales</taxon>
        <taxon>Rhodobacter group</taxon>
        <taxon>Rhodobacter</taxon>
    </lineage>
</organism>